<keyword id="KW-0131">Cell cycle</keyword>
<keyword id="KW-0132">Cell division</keyword>
<keyword id="KW-0342">GTP-binding</keyword>
<keyword id="KW-0460">Magnesium</keyword>
<keyword id="KW-0479">Metal-binding</keyword>
<keyword id="KW-0547">Nucleotide-binding</keyword>
<keyword id="KW-1185">Reference proteome</keyword>
<keyword id="KW-0717">Septation</keyword>
<name>ENGB_HELPY</name>
<accession>O26087</accession>
<sequence length="208" mass="23559">MIVIKDAHFLTSSSQLFQCPASLTSEMVVLGRSNVGKSSFINTLLGKNLAKSSATPGKTRLANFFSTTWEDKENALRATFNVIDLPGFGYAKVSKSLKKEWEGFLWELLSVRVSIKLFIHLVDARHLDLEIDKNAKENIQALLRPDQAYLSLFTKFDKLNKNEQHRLFLNAPKPFLINTAHFNALSSKYPTLEIVRQTLLKHLLTNPL</sequence>
<feature type="chain" id="PRO_0000157753" description="Probable GTP-binding protein EngB">
    <location>
        <begin position="1"/>
        <end position="208"/>
    </location>
</feature>
<feature type="domain" description="EngB-type G" evidence="1">
    <location>
        <begin position="23"/>
        <end position="205"/>
    </location>
</feature>
<feature type="binding site" evidence="1">
    <location>
        <begin position="31"/>
        <end position="38"/>
    </location>
    <ligand>
        <name>GTP</name>
        <dbReference type="ChEBI" id="CHEBI:37565"/>
    </ligand>
</feature>
<feature type="binding site" evidence="1">
    <location>
        <position position="38"/>
    </location>
    <ligand>
        <name>Mg(2+)</name>
        <dbReference type="ChEBI" id="CHEBI:18420"/>
    </ligand>
</feature>
<feature type="binding site" evidence="1">
    <location>
        <begin position="57"/>
        <end position="61"/>
    </location>
    <ligand>
        <name>GTP</name>
        <dbReference type="ChEBI" id="CHEBI:37565"/>
    </ligand>
</feature>
<feature type="binding site" evidence="1">
    <location>
        <position position="59"/>
    </location>
    <ligand>
        <name>Mg(2+)</name>
        <dbReference type="ChEBI" id="CHEBI:18420"/>
    </ligand>
</feature>
<feature type="binding site" evidence="1">
    <location>
        <begin position="84"/>
        <end position="87"/>
    </location>
    <ligand>
        <name>GTP</name>
        <dbReference type="ChEBI" id="CHEBI:37565"/>
    </ligand>
</feature>
<feature type="binding site" evidence="1">
    <location>
        <begin position="154"/>
        <end position="157"/>
    </location>
    <ligand>
        <name>GTP</name>
        <dbReference type="ChEBI" id="CHEBI:37565"/>
    </ligand>
</feature>
<feature type="binding site" evidence="1">
    <location>
        <begin position="182"/>
        <end position="184"/>
    </location>
    <ligand>
        <name>GTP</name>
        <dbReference type="ChEBI" id="CHEBI:37565"/>
    </ligand>
</feature>
<dbReference type="EMBL" id="AE000511">
    <property type="protein sequence ID" value="AAD08606.1"/>
    <property type="molecule type" value="Genomic_DNA"/>
</dbReference>
<dbReference type="PIR" id="G64715">
    <property type="entry name" value="G64715"/>
</dbReference>
<dbReference type="RefSeq" id="NP_208358.1">
    <property type="nucleotide sequence ID" value="NC_000915.1"/>
</dbReference>
<dbReference type="SMR" id="O26087"/>
<dbReference type="DIP" id="DIP-3106N"/>
<dbReference type="FunCoup" id="O26087">
    <property type="interactions" value="270"/>
</dbReference>
<dbReference type="IntAct" id="O26087">
    <property type="interactions" value="2"/>
</dbReference>
<dbReference type="MINT" id="O26087"/>
<dbReference type="STRING" id="85962.HP_1567"/>
<dbReference type="PaxDb" id="85962-C694_08120"/>
<dbReference type="EnsemblBacteria" id="AAD08606">
    <property type="protein sequence ID" value="AAD08606"/>
    <property type="gene ID" value="HP_1567"/>
</dbReference>
<dbReference type="KEGG" id="heo:C694_08120"/>
<dbReference type="KEGG" id="hpy:HP_1567"/>
<dbReference type="PATRIC" id="fig|85962.47.peg.1685"/>
<dbReference type="eggNOG" id="COG0218">
    <property type="taxonomic scope" value="Bacteria"/>
</dbReference>
<dbReference type="InParanoid" id="O26087"/>
<dbReference type="OrthoDB" id="9804921at2"/>
<dbReference type="PhylomeDB" id="O26087"/>
<dbReference type="Proteomes" id="UP000000429">
    <property type="component" value="Chromosome"/>
</dbReference>
<dbReference type="GO" id="GO:0005829">
    <property type="term" value="C:cytosol"/>
    <property type="evidence" value="ECO:0000318"/>
    <property type="project" value="GO_Central"/>
</dbReference>
<dbReference type="GO" id="GO:0005525">
    <property type="term" value="F:GTP binding"/>
    <property type="evidence" value="ECO:0007669"/>
    <property type="project" value="UniProtKB-UniRule"/>
</dbReference>
<dbReference type="GO" id="GO:0046872">
    <property type="term" value="F:metal ion binding"/>
    <property type="evidence" value="ECO:0007669"/>
    <property type="project" value="UniProtKB-KW"/>
</dbReference>
<dbReference type="GO" id="GO:0000917">
    <property type="term" value="P:division septum assembly"/>
    <property type="evidence" value="ECO:0007669"/>
    <property type="project" value="UniProtKB-KW"/>
</dbReference>
<dbReference type="CDD" id="cd01876">
    <property type="entry name" value="YihA_EngB"/>
    <property type="match status" value="1"/>
</dbReference>
<dbReference type="FunFam" id="3.40.50.300:FF:002409">
    <property type="entry name" value="Probable GTP-binding protein EngB"/>
    <property type="match status" value="1"/>
</dbReference>
<dbReference type="Gene3D" id="3.40.50.300">
    <property type="entry name" value="P-loop containing nucleotide triphosphate hydrolases"/>
    <property type="match status" value="1"/>
</dbReference>
<dbReference type="HAMAP" id="MF_00321">
    <property type="entry name" value="GTPase_EngB"/>
    <property type="match status" value="1"/>
</dbReference>
<dbReference type="InterPro" id="IPR030393">
    <property type="entry name" value="G_ENGB_dom"/>
</dbReference>
<dbReference type="InterPro" id="IPR006073">
    <property type="entry name" value="GTP-bd"/>
</dbReference>
<dbReference type="InterPro" id="IPR019987">
    <property type="entry name" value="GTP-bd_ribosome_bio_YsxC"/>
</dbReference>
<dbReference type="InterPro" id="IPR027417">
    <property type="entry name" value="P-loop_NTPase"/>
</dbReference>
<dbReference type="NCBIfam" id="TIGR03598">
    <property type="entry name" value="GTPase_YsxC"/>
    <property type="match status" value="1"/>
</dbReference>
<dbReference type="PANTHER" id="PTHR11649:SF13">
    <property type="entry name" value="ENGB-TYPE G DOMAIN-CONTAINING PROTEIN"/>
    <property type="match status" value="1"/>
</dbReference>
<dbReference type="PANTHER" id="PTHR11649">
    <property type="entry name" value="MSS1/TRME-RELATED GTP-BINDING PROTEIN"/>
    <property type="match status" value="1"/>
</dbReference>
<dbReference type="Pfam" id="PF01926">
    <property type="entry name" value="MMR_HSR1"/>
    <property type="match status" value="1"/>
</dbReference>
<dbReference type="SUPFAM" id="SSF52540">
    <property type="entry name" value="P-loop containing nucleoside triphosphate hydrolases"/>
    <property type="match status" value="1"/>
</dbReference>
<dbReference type="PROSITE" id="PS51706">
    <property type="entry name" value="G_ENGB"/>
    <property type="match status" value="1"/>
</dbReference>
<comment type="function">
    <text evidence="1">Necessary for normal cell division and for the maintenance of normal septation.</text>
</comment>
<comment type="cofactor">
    <cofactor evidence="1">
        <name>Mg(2+)</name>
        <dbReference type="ChEBI" id="CHEBI:18420"/>
    </cofactor>
</comment>
<comment type="similarity">
    <text evidence="1">Belongs to the TRAFAC class TrmE-Era-EngA-EngB-Septin-like GTPase superfamily. EngB GTPase family.</text>
</comment>
<reference key="1">
    <citation type="journal article" date="1997" name="Nature">
        <title>The complete genome sequence of the gastric pathogen Helicobacter pylori.</title>
        <authorList>
            <person name="Tomb J.-F."/>
            <person name="White O."/>
            <person name="Kerlavage A.R."/>
            <person name="Clayton R.A."/>
            <person name="Sutton G.G."/>
            <person name="Fleischmann R.D."/>
            <person name="Ketchum K.A."/>
            <person name="Klenk H.-P."/>
            <person name="Gill S.R."/>
            <person name="Dougherty B.A."/>
            <person name="Nelson K.E."/>
            <person name="Quackenbush J."/>
            <person name="Zhou L."/>
            <person name="Kirkness E.F."/>
            <person name="Peterson S.N."/>
            <person name="Loftus B.J."/>
            <person name="Richardson D.L."/>
            <person name="Dodson R.J."/>
            <person name="Khalak H.G."/>
            <person name="Glodek A."/>
            <person name="McKenney K."/>
            <person name="FitzGerald L.M."/>
            <person name="Lee N."/>
            <person name="Adams M.D."/>
            <person name="Hickey E.K."/>
            <person name="Berg D.E."/>
            <person name="Gocayne J.D."/>
            <person name="Utterback T.R."/>
            <person name="Peterson J.D."/>
            <person name="Kelley J.M."/>
            <person name="Cotton M.D."/>
            <person name="Weidman J.F."/>
            <person name="Fujii C."/>
            <person name="Bowman C."/>
            <person name="Watthey L."/>
            <person name="Wallin E."/>
            <person name="Hayes W.S."/>
            <person name="Borodovsky M."/>
            <person name="Karp P.D."/>
            <person name="Smith H.O."/>
            <person name="Fraser C.M."/>
            <person name="Venter J.C."/>
        </authorList>
    </citation>
    <scope>NUCLEOTIDE SEQUENCE [LARGE SCALE GENOMIC DNA]</scope>
    <source>
        <strain>ATCC 700392 / 26695</strain>
    </source>
</reference>
<protein>
    <recommendedName>
        <fullName evidence="1">Probable GTP-binding protein EngB</fullName>
    </recommendedName>
</protein>
<organism>
    <name type="scientific">Helicobacter pylori (strain ATCC 700392 / 26695)</name>
    <name type="common">Campylobacter pylori</name>
    <dbReference type="NCBI Taxonomy" id="85962"/>
    <lineage>
        <taxon>Bacteria</taxon>
        <taxon>Pseudomonadati</taxon>
        <taxon>Campylobacterota</taxon>
        <taxon>Epsilonproteobacteria</taxon>
        <taxon>Campylobacterales</taxon>
        <taxon>Helicobacteraceae</taxon>
        <taxon>Helicobacter</taxon>
    </lineage>
</organism>
<evidence type="ECO:0000255" key="1">
    <source>
        <dbReference type="HAMAP-Rule" id="MF_00321"/>
    </source>
</evidence>
<gene>
    <name evidence="1" type="primary">engB</name>
    <name type="ordered locus">HP_1567</name>
</gene>
<proteinExistence type="inferred from homology"/>